<organism>
    <name type="scientific">Nitrosospira multiformis (strain ATCC 25196 / NCIMB 11849 / C 71)</name>
    <dbReference type="NCBI Taxonomy" id="323848"/>
    <lineage>
        <taxon>Bacteria</taxon>
        <taxon>Pseudomonadati</taxon>
        <taxon>Pseudomonadota</taxon>
        <taxon>Betaproteobacteria</taxon>
        <taxon>Nitrosomonadales</taxon>
        <taxon>Nitrosomonadaceae</taxon>
        <taxon>Nitrosospira</taxon>
    </lineage>
</organism>
<evidence type="ECO:0000255" key="1">
    <source>
        <dbReference type="HAMAP-Rule" id="MF_01810"/>
    </source>
</evidence>
<evidence type="ECO:0000256" key="2">
    <source>
        <dbReference type="SAM" id="MobiDB-lite"/>
    </source>
</evidence>
<proteinExistence type="inferred from homology"/>
<accession>Q2Y5A8</accession>
<comment type="function">
    <text evidence="1">Required for the insertion and/or proper folding and/or complex formation of integral membrane proteins into the membrane. Involved in integration of membrane proteins that insert both dependently and independently of the Sec translocase complex, as well as at least some lipoproteins. Aids folding of multispanning membrane proteins.</text>
</comment>
<comment type="subunit">
    <text evidence="1">Interacts with the Sec translocase complex via SecD. Specifically interacts with transmembrane segments of nascent integral membrane proteins during membrane integration.</text>
</comment>
<comment type="subcellular location">
    <subcellularLocation>
        <location evidence="1">Cell inner membrane</location>
        <topology evidence="1">Multi-pass membrane protein</topology>
    </subcellularLocation>
</comment>
<comment type="similarity">
    <text evidence="1">Belongs to the OXA1/ALB3/YidC family. Type 1 subfamily.</text>
</comment>
<sequence length="569" mass="63210">MDTQRFVLFLIFATSLLFLWDAWQKEQYPATQGPKTAVQGTETQANTGTAGTAETPVPGDQLASSVPQRGSTAENGAPVRAAGKLESGDKITIKTDMVLAEIDTAGGDIRRLELLHQPSKEDKNKPFALLESDPERVYIAQSGLIGEGLPTHKTRFTAEPGAYELAAGQDKIQIRLSAPEVDGVQVTKIYTFHRGSYLIDVSFEVANQRNAAIQPFSYFQMLRDSRPPVGSFFMVPTYTGAALYTEEEKFRKIEFSALDKGNASYPKNADNGWIAMLQQYFLAAWLPKDKLPREYYAKRLGENEYTAGVIVPVGQIEPGSSATVTVPLYAGPEEQSKLASIAPGLDLVVDYGWLTVIGAPLFWLLSLFHSWTGNWGVAIILLTMSVKLAFFPLSAAGYRSMAKLRLVTPKLQRLREQHGNDRQRMHQAMMDFYKTEKINPMGGCLPILVQIPVFISLYWVLLSSVELRYASFALWIEDLSAPDPYYVLPVIMGISMFLQQRLSPPATDPIQARVMQIMPLAFSVFFFFFPAGLVLYSLVNNVLSIAQQWQITRMIEGSAANTSKQKKAN</sequence>
<dbReference type="EMBL" id="CP000103">
    <property type="protein sequence ID" value="ABB76063.1"/>
    <property type="molecule type" value="Genomic_DNA"/>
</dbReference>
<dbReference type="RefSeq" id="WP_011382048.1">
    <property type="nucleotide sequence ID" value="NC_007614.1"/>
</dbReference>
<dbReference type="SMR" id="Q2Y5A8"/>
<dbReference type="STRING" id="323848.Nmul_A2776"/>
<dbReference type="KEGG" id="nmu:Nmul_A2776"/>
<dbReference type="eggNOG" id="COG0706">
    <property type="taxonomic scope" value="Bacteria"/>
</dbReference>
<dbReference type="HOGENOM" id="CLU_016535_3_0_4"/>
<dbReference type="OrthoDB" id="9780552at2"/>
<dbReference type="Proteomes" id="UP000002718">
    <property type="component" value="Chromosome"/>
</dbReference>
<dbReference type="GO" id="GO:0005886">
    <property type="term" value="C:plasma membrane"/>
    <property type="evidence" value="ECO:0007669"/>
    <property type="project" value="UniProtKB-SubCell"/>
</dbReference>
<dbReference type="GO" id="GO:0032977">
    <property type="term" value="F:membrane insertase activity"/>
    <property type="evidence" value="ECO:0007669"/>
    <property type="project" value="InterPro"/>
</dbReference>
<dbReference type="GO" id="GO:0051205">
    <property type="term" value="P:protein insertion into membrane"/>
    <property type="evidence" value="ECO:0007669"/>
    <property type="project" value="TreeGrafter"/>
</dbReference>
<dbReference type="GO" id="GO:0015031">
    <property type="term" value="P:protein transport"/>
    <property type="evidence" value="ECO:0007669"/>
    <property type="project" value="UniProtKB-KW"/>
</dbReference>
<dbReference type="CDD" id="cd20070">
    <property type="entry name" value="5TM_YidC_Alb3"/>
    <property type="match status" value="1"/>
</dbReference>
<dbReference type="CDD" id="cd19961">
    <property type="entry name" value="EcYidC-like_peri"/>
    <property type="match status" value="1"/>
</dbReference>
<dbReference type="Gene3D" id="2.70.98.90">
    <property type="match status" value="1"/>
</dbReference>
<dbReference type="HAMAP" id="MF_01810">
    <property type="entry name" value="YidC_type1"/>
    <property type="match status" value="1"/>
</dbReference>
<dbReference type="InterPro" id="IPR019998">
    <property type="entry name" value="Membr_insert_YidC"/>
</dbReference>
<dbReference type="InterPro" id="IPR028053">
    <property type="entry name" value="Membr_insert_YidC_N"/>
</dbReference>
<dbReference type="InterPro" id="IPR001708">
    <property type="entry name" value="YidC/ALB3/OXA1/COX18"/>
</dbReference>
<dbReference type="InterPro" id="IPR028055">
    <property type="entry name" value="YidC/Oxa/ALB_C"/>
</dbReference>
<dbReference type="InterPro" id="IPR047196">
    <property type="entry name" value="YidC_ALB_C"/>
</dbReference>
<dbReference type="InterPro" id="IPR038221">
    <property type="entry name" value="YidC_periplasmic_sf"/>
</dbReference>
<dbReference type="NCBIfam" id="NF002352">
    <property type="entry name" value="PRK01318.1-3"/>
    <property type="match status" value="1"/>
</dbReference>
<dbReference type="NCBIfam" id="TIGR03593">
    <property type="entry name" value="yidC_nterm"/>
    <property type="match status" value="1"/>
</dbReference>
<dbReference type="NCBIfam" id="TIGR03592">
    <property type="entry name" value="yidC_oxa1_cterm"/>
    <property type="match status" value="1"/>
</dbReference>
<dbReference type="PANTHER" id="PTHR12428:SF65">
    <property type="entry name" value="CYTOCHROME C OXIDASE ASSEMBLY PROTEIN COX18, MITOCHONDRIAL"/>
    <property type="match status" value="1"/>
</dbReference>
<dbReference type="PANTHER" id="PTHR12428">
    <property type="entry name" value="OXA1"/>
    <property type="match status" value="1"/>
</dbReference>
<dbReference type="Pfam" id="PF02096">
    <property type="entry name" value="60KD_IMP"/>
    <property type="match status" value="1"/>
</dbReference>
<dbReference type="Pfam" id="PF14849">
    <property type="entry name" value="YidC_periplas"/>
    <property type="match status" value="1"/>
</dbReference>
<dbReference type="PRINTS" id="PR00701">
    <property type="entry name" value="60KDINNERMP"/>
</dbReference>
<dbReference type="PRINTS" id="PR01900">
    <property type="entry name" value="YIDCPROTEIN"/>
</dbReference>
<feature type="chain" id="PRO_1000070128" description="Membrane protein insertase YidC">
    <location>
        <begin position="1"/>
        <end position="569"/>
    </location>
</feature>
<feature type="transmembrane region" description="Helical" evidence="1">
    <location>
        <begin position="6"/>
        <end position="26"/>
    </location>
</feature>
<feature type="transmembrane region" description="Helical" evidence="1">
    <location>
        <begin position="348"/>
        <end position="368"/>
    </location>
</feature>
<feature type="transmembrane region" description="Helical" evidence="1">
    <location>
        <begin position="375"/>
        <end position="395"/>
    </location>
</feature>
<feature type="transmembrane region" description="Helical" evidence="1">
    <location>
        <begin position="442"/>
        <end position="462"/>
    </location>
</feature>
<feature type="transmembrane region" description="Helical" evidence="1">
    <location>
        <begin position="479"/>
        <end position="499"/>
    </location>
</feature>
<feature type="transmembrane region" description="Helical" evidence="1">
    <location>
        <begin position="519"/>
        <end position="539"/>
    </location>
</feature>
<feature type="region of interest" description="Disordered" evidence="2">
    <location>
        <begin position="32"/>
        <end position="81"/>
    </location>
</feature>
<feature type="compositionally biased region" description="Polar residues" evidence="2">
    <location>
        <begin position="32"/>
        <end position="52"/>
    </location>
</feature>
<feature type="compositionally biased region" description="Polar residues" evidence="2">
    <location>
        <begin position="62"/>
        <end position="74"/>
    </location>
</feature>
<gene>
    <name evidence="1" type="primary">yidC</name>
    <name type="ordered locus">Nmul_A2776</name>
</gene>
<protein>
    <recommendedName>
        <fullName evidence="1">Membrane protein insertase YidC</fullName>
    </recommendedName>
    <alternativeName>
        <fullName evidence="1">Foldase YidC</fullName>
    </alternativeName>
    <alternativeName>
        <fullName evidence="1">Membrane integrase YidC</fullName>
    </alternativeName>
    <alternativeName>
        <fullName evidence="1">Membrane protein YidC</fullName>
    </alternativeName>
</protein>
<reference key="1">
    <citation type="submission" date="2005-08" db="EMBL/GenBank/DDBJ databases">
        <title>Complete sequence of chromosome 1 of Nitrosospira multiformis ATCC 25196.</title>
        <authorList>
            <person name="Copeland A."/>
            <person name="Lucas S."/>
            <person name="Lapidus A."/>
            <person name="Barry K."/>
            <person name="Detter J.C."/>
            <person name="Glavina T."/>
            <person name="Hammon N."/>
            <person name="Israni S."/>
            <person name="Pitluck S."/>
            <person name="Chain P."/>
            <person name="Malfatti S."/>
            <person name="Shin M."/>
            <person name="Vergez L."/>
            <person name="Schmutz J."/>
            <person name="Larimer F."/>
            <person name="Land M."/>
            <person name="Hauser L."/>
            <person name="Kyrpides N."/>
            <person name="Lykidis A."/>
            <person name="Richardson P."/>
        </authorList>
    </citation>
    <scope>NUCLEOTIDE SEQUENCE [LARGE SCALE GENOMIC DNA]</scope>
    <source>
        <strain>ATCC 25196 / NCIMB 11849 / C 71</strain>
    </source>
</reference>
<name>YIDC_NITMU</name>
<keyword id="KW-0997">Cell inner membrane</keyword>
<keyword id="KW-1003">Cell membrane</keyword>
<keyword id="KW-0143">Chaperone</keyword>
<keyword id="KW-0472">Membrane</keyword>
<keyword id="KW-0653">Protein transport</keyword>
<keyword id="KW-1185">Reference proteome</keyword>
<keyword id="KW-0812">Transmembrane</keyword>
<keyword id="KW-1133">Transmembrane helix</keyword>
<keyword id="KW-0813">Transport</keyword>